<sequence length="104" mass="11470">MQKIRRDDEVIVIAGKDKGKRGKVLKVLADDRLVVGGVNLIKRHTKPNPMLGQQGGIVEKEAPLHVSNVAIFNTETSKADRVGFKVEDGKKIRVFKSTQKPVQA</sequence>
<gene>
    <name evidence="1" type="primary">rplX</name>
    <name type="ordered locus">PA4252</name>
</gene>
<proteinExistence type="evidence at protein level"/>
<keyword id="KW-0002">3D-structure</keyword>
<keyword id="KW-1185">Reference proteome</keyword>
<keyword id="KW-0687">Ribonucleoprotein</keyword>
<keyword id="KW-0689">Ribosomal protein</keyword>
<keyword id="KW-0694">RNA-binding</keyword>
<keyword id="KW-0699">rRNA-binding</keyword>
<reference key="1">
    <citation type="journal article" date="2000" name="Nature">
        <title>Complete genome sequence of Pseudomonas aeruginosa PAO1, an opportunistic pathogen.</title>
        <authorList>
            <person name="Stover C.K."/>
            <person name="Pham X.-Q.T."/>
            <person name="Erwin A.L."/>
            <person name="Mizoguchi S.D."/>
            <person name="Warrener P."/>
            <person name="Hickey M.J."/>
            <person name="Brinkman F.S.L."/>
            <person name="Hufnagle W.O."/>
            <person name="Kowalik D.J."/>
            <person name="Lagrou M."/>
            <person name="Garber R.L."/>
            <person name="Goltry L."/>
            <person name="Tolentino E."/>
            <person name="Westbrock-Wadman S."/>
            <person name="Yuan Y."/>
            <person name="Brody L.L."/>
            <person name="Coulter S.N."/>
            <person name="Folger K.R."/>
            <person name="Kas A."/>
            <person name="Larbig K."/>
            <person name="Lim R.M."/>
            <person name="Smith K.A."/>
            <person name="Spencer D.H."/>
            <person name="Wong G.K.-S."/>
            <person name="Wu Z."/>
            <person name="Paulsen I.T."/>
            <person name="Reizer J."/>
            <person name="Saier M.H. Jr."/>
            <person name="Hancock R.E.W."/>
            <person name="Lory S."/>
            <person name="Olson M.V."/>
        </authorList>
    </citation>
    <scope>NUCLEOTIDE SEQUENCE [LARGE SCALE GENOMIC DNA]</scope>
    <source>
        <strain>ATCC 15692 / DSM 22644 / CIP 104116 / JCM 14847 / LMG 12228 / 1C / PRS 101 / PAO1</strain>
    </source>
</reference>
<name>RL24_PSEAE</name>
<comment type="function">
    <text evidence="1">One of two assembly initiator proteins, it binds directly to the 5'-end of the 23S rRNA, where it nucleates assembly of the 50S subunit.</text>
</comment>
<comment type="function">
    <text evidence="1">One of the proteins that surrounds the polypeptide exit tunnel on the outside of the subunit.</text>
</comment>
<comment type="subunit">
    <text evidence="1">Part of the 50S ribosomal subunit.</text>
</comment>
<comment type="similarity">
    <text evidence="1">Belongs to the universal ribosomal protein uL24 family.</text>
</comment>
<feature type="chain" id="PRO_0000130697" description="Large ribosomal subunit protein uL24">
    <location>
        <begin position="1"/>
        <end position="104"/>
    </location>
</feature>
<dbReference type="EMBL" id="AE004091">
    <property type="protein sequence ID" value="AAG07640.1"/>
    <property type="molecule type" value="Genomic_DNA"/>
</dbReference>
<dbReference type="PIR" id="B83115">
    <property type="entry name" value="B83115"/>
</dbReference>
<dbReference type="RefSeq" id="NP_252942.1">
    <property type="nucleotide sequence ID" value="NC_002516.2"/>
</dbReference>
<dbReference type="RefSeq" id="WP_003093711.1">
    <property type="nucleotide sequence ID" value="NZ_QZGE01000028.1"/>
</dbReference>
<dbReference type="PDB" id="7UNR">
    <property type="method" value="EM"/>
    <property type="resolution" value="2.90 A"/>
    <property type="chains" value="W=1-104"/>
</dbReference>
<dbReference type="PDB" id="7UNU">
    <property type="method" value="EM"/>
    <property type="resolution" value="2.90 A"/>
    <property type="chains" value="W=1-104"/>
</dbReference>
<dbReference type="PDB" id="7UNV">
    <property type="method" value="EM"/>
    <property type="resolution" value="2.70 A"/>
    <property type="chains" value="W=1-104"/>
</dbReference>
<dbReference type="PDB" id="7UNW">
    <property type="method" value="EM"/>
    <property type="resolution" value="2.60 A"/>
    <property type="chains" value="W=1-104"/>
</dbReference>
<dbReference type="PDB" id="8CD1">
    <property type="method" value="EM"/>
    <property type="resolution" value="3.00 A"/>
    <property type="chains" value="U=1-104"/>
</dbReference>
<dbReference type="PDB" id="8RWG">
    <property type="method" value="EM"/>
    <property type="resolution" value="2.46 A"/>
    <property type="chains" value="U=1-104"/>
</dbReference>
<dbReference type="PDBsum" id="7UNR"/>
<dbReference type="PDBsum" id="7UNU"/>
<dbReference type="PDBsum" id="7UNV"/>
<dbReference type="PDBsum" id="7UNW"/>
<dbReference type="PDBsum" id="8CD1"/>
<dbReference type="PDBsum" id="8RWG"/>
<dbReference type="EMDB" id="EMD-16566"/>
<dbReference type="EMDB" id="EMD-19547"/>
<dbReference type="EMDB" id="EMD-26630"/>
<dbReference type="EMDB" id="EMD-26633"/>
<dbReference type="EMDB" id="EMD-26634"/>
<dbReference type="EMDB" id="EMD-26635"/>
<dbReference type="SMR" id="Q9HWE6"/>
<dbReference type="FunCoup" id="Q9HWE6">
    <property type="interactions" value="789"/>
</dbReference>
<dbReference type="STRING" id="208964.PA4252"/>
<dbReference type="PaxDb" id="208964-PA4252"/>
<dbReference type="DNASU" id="881810"/>
<dbReference type="GeneID" id="77219209"/>
<dbReference type="GeneID" id="881810"/>
<dbReference type="KEGG" id="pae:PA4252"/>
<dbReference type="PATRIC" id="fig|208964.12.peg.4453"/>
<dbReference type="PseudoCAP" id="PA4252"/>
<dbReference type="HOGENOM" id="CLU_093315_2_2_6"/>
<dbReference type="InParanoid" id="Q9HWE6"/>
<dbReference type="OrthoDB" id="9807419at2"/>
<dbReference type="PhylomeDB" id="Q9HWE6"/>
<dbReference type="BioCyc" id="PAER208964:G1FZ6-4325-MONOMER"/>
<dbReference type="PRO" id="PR:Q9HWE6"/>
<dbReference type="Proteomes" id="UP000002438">
    <property type="component" value="Chromosome"/>
</dbReference>
<dbReference type="GO" id="GO:0022625">
    <property type="term" value="C:cytosolic large ribosomal subunit"/>
    <property type="evidence" value="ECO:0000318"/>
    <property type="project" value="GO_Central"/>
</dbReference>
<dbReference type="GO" id="GO:0019843">
    <property type="term" value="F:rRNA binding"/>
    <property type="evidence" value="ECO:0007669"/>
    <property type="project" value="UniProtKB-UniRule"/>
</dbReference>
<dbReference type="GO" id="GO:0003735">
    <property type="term" value="F:structural constituent of ribosome"/>
    <property type="evidence" value="ECO:0007669"/>
    <property type="project" value="InterPro"/>
</dbReference>
<dbReference type="GO" id="GO:0006412">
    <property type="term" value="P:translation"/>
    <property type="evidence" value="ECO:0000318"/>
    <property type="project" value="GO_Central"/>
</dbReference>
<dbReference type="CDD" id="cd06089">
    <property type="entry name" value="KOW_RPL26"/>
    <property type="match status" value="1"/>
</dbReference>
<dbReference type="FunFam" id="2.30.30.30:FF:000004">
    <property type="entry name" value="50S ribosomal protein L24"/>
    <property type="match status" value="1"/>
</dbReference>
<dbReference type="Gene3D" id="2.30.30.30">
    <property type="match status" value="1"/>
</dbReference>
<dbReference type="HAMAP" id="MF_01326_B">
    <property type="entry name" value="Ribosomal_uL24_B"/>
    <property type="match status" value="1"/>
</dbReference>
<dbReference type="InterPro" id="IPR005824">
    <property type="entry name" value="KOW"/>
</dbReference>
<dbReference type="InterPro" id="IPR014722">
    <property type="entry name" value="Rib_uL2_dom2"/>
</dbReference>
<dbReference type="InterPro" id="IPR003256">
    <property type="entry name" value="Ribosomal_uL24"/>
</dbReference>
<dbReference type="InterPro" id="IPR005825">
    <property type="entry name" value="Ribosomal_uL24_CS"/>
</dbReference>
<dbReference type="InterPro" id="IPR041988">
    <property type="entry name" value="Ribosomal_uL24_KOW"/>
</dbReference>
<dbReference type="InterPro" id="IPR008991">
    <property type="entry name" value="Translation_prot_SH3-like_sf"/>
</dbReference>
<dbReference type="NCBIfam" id="TIGR01079">
    <property type="entry name" value="rplX_bact"/>
    <property type="match status" value="1"/>
</dbReference>
<dbReference type="PANTHER" id="PTHR12903">
    <property type="entry name" value="MITOCHONDRIAL RIBOSOMAL PROTEIN L24"/>
    <property type="match status" value="1"/>
</dbReference>
<dbReference type="Pfam" id="PF00467">
    <property type="entry name" value="KOW"/>
    <property type="match status" value="1"/>
</dbReference>
<dbReference type="Pfam" id="PF17136">
    <property type="entry name" value="ribosomal_L24"/>
    <property type="match status" value="1"/>
</dbReference>
<dbReference type="SMART" id="SM00739">
    <property type="entry name" value="KOW"/>
    <property type="match status" value="1"/>
</dbReference>
<dbReference type="SUPFAM" id="SSF50104">
    <property type="entry name" value="Translation proteins SH3-like domain"/>
    <property type="match status" value="1"/>
</dbReference>
<dbReference type="PROSITE" id="PS01108">
    <property type="entry name" value="RIBOSOMAL_L24"/>
    <property type="match status" value="1"/>
</dbReference>
<protein>
    <recommendedName>
        <fullName evidence="1">Large ribosomal subunit protein uL24</fullName>
    </recommendedName>
    <alternativeName>
        <fullName evidence="2">50S ribosomal protein L24</fullName>
    </alternativeName>
</protein>
<evidence type="ECO:0000255" key="1">
    <source>
        <dbReference type="HAMAP-Rule" id="MF_01326"/>
    </source>
</evidence>
<evidence type="ECO:0000305" key="2"/>
<organism>
    <name type="scientific">Pseudomonas aeruginosa (strain ATCC 15692 / DSM 22644 / CIP 104116 / JCM 14847 / LMG 12228 / 1C / PRS 101 / PAO1)</name>
    <dbReference type="NCBI Taxonomy" id="208964"/>
    <lineage>
        <taxon>Bacteria</taxon>
        <taxon>Pseudomonadati</taxon>
        <taxon>Pseudomonadota</taxon>
        <taxon>Gammaproteobacteria</taxon>
        <taxon>Pseudomonadales</taxon>
        <taxon>Pseudomonadaceae</taxon>
        <taxon>Pseudomonas</taxon>
    </lineage>
</organism>
<accession>Q9HWE6</accession>